<gene>
    <name type="primary">STY-15</name>
</gene>
<name>PTP15_STYPL</name>
<evidence type="ECO:0000255" key="1">
    <source>
        <dbReference type="PROSITE-ProRule" id="PRU00160"/>
    </source>
</evidence>
<evidence type="ECO:0000255" key="2">
    <source>
        <dbReference type="PROSITE-ProRule" id="PRU10044"/>
    </source>
</evidence>
<evidence type="ECO:0000305" key="3"/>
<proteinExistence type="evidence at transcript level"/>
<protein>
    <recommendedName>
        <fullName>Tyrosine-protein phosphatase 15</fullName>
        <ecNumber>3.1.3.48</ecNumber>
    </recommendedName>
</protein>
<organism>
    <name type="scientific">Styela plicata</name>
    <name type="common">Wrinkled sea squirt</name>
    <name type="synonym">Ascidia plicata</name>
    <dbReference type="NCBI Taxonomy" id="7726"/>
    <lineage>
        <taxon>Eukaryota</taxon>
        <taxon>Metazoa</taxon>
        <taxon>Chordata</taxon>
        <taxon>Tunicata</taxon>
        <taxon>Ascidiacea</taxon>
        <taxon>Stolidobranchia</taxon>
        <taxon>Styelidae</taxon>
        <taxon>Styela</taxon>
    </lineage>
</organism>
<comment type="catalytic activity">
    <reaction evidence="2">
        <text>O-phospho-L-tyrosyl-[protein] + H2O = L-tyrosyl-[protein] + phosphate</text>
        <dbReference type="Rhea" id="RHEA:10684"/>
        <dbReference type="Rhea" id="RHEA-COMP:10136"/>
        <dbReference type="Rhea" id="RHEA-COMP:20101"/>
        <dbReference type="ChEBI" id="CHEBI:15377"/>
        <dbReference type="ChEBI" id="CHEBI:43474"/>
        <dbReference type="ChEBI" id="CHEBI:46858"/>
        <dbReference type="ChEBI" id="CHEBI:61978"/>
        <dbReference type="EC" id="3.1.3.48"/>
    </reaction>
</comment>
<comment type="similarity">
    <text evidence="3">Belongs to the protein-tyrosine phosphatase family.</text>
</comment>
<keyword id="KW-0378">Hydrolase</keyword>
<keyword id="KW-0904">Protein phosphatase</keyword>
<sequence>WRMVYDNNVNTIVMLTKAREGNEEQSAIYWPSDIGEQMNMKSITVTLVSDETDGPALKRKLKIERGAISRTVTQLHYTGWNSTSCPEDGRDVIELVNKMQENIRSTGDGVALI</sequence>
<feature type="chain" id="PRO_0000094903" description="Tyrosine-protein phosphatase 15">
    <location>
        <begin position="1" status="less than"/>
        <end position="113" status="greater than"/>
    </location>
</feature>
<feature type="domain" description="Tyrosine-protein phosphatase" evidence="1">
    <location>
        <begin position="1" status="less than"/>
        <end position="113" status="greater than"/>
    </location>
</feature>
<feature type="non-terminal residue">
    <location>
        <position position="1"/>
    </location>
</feature>
<feature type="non-terminal residue">
    <location>
        <position position="113"/>
    </location>
</feature>
<reference key="1">
    <citation type="journal article" date="1991" name="Immunogenetics">
        <title>Protein tyrosine phosphatase domains from the protochordate Styela plicata.</title>
        <authorList>
            <person name="Matthews R.J."/>
            <person name="Flores E."/>
            <person name="Thomas M.L."/>
        </authorList>
    </citation>
    <scope>NUCLEOTIDE SEQUENCE [MRNA]</scope>
</reference>
<dbReference type="EC" id="3.1.3.48"/>
<dbReference type="EMBL" id="M38000">
    <property type="protein sequence ID" value="AAA29833.1"/>
    <property type="molecule type" value="mRNA"/>
</dbReference>
<dbReference type="SMR" id="P28207"/>
<dbReference type="GO" id="GO:0004725">
    <property type="term" value="F:protein tyrosine phosphatase activity"/>
    <property type="evidence" value="ECO:0007669"/>
    <property type="project" value="UniProtKB-EC"/>
</dbReference>
<dbReference type="CDD" id="cd00047">
    <property type="entry name" value="PTPc"/>
    <property type="match status" value="1"/>
</dbReference>
<dbReference type="Gene3D" id="3.90.190.10">
    <property type="entry name" value="Protein tyrosine phosphatase superfamily"/>
    <property type="match status" value="1"/>
</dbReference>
<dbReference type="InterPro" id="IPR029021">
    <property type="entry name" value="Prot-tyrosine_phosphatase-like"/>
</dbReference>
<dbReference type="InterPro" id="IPR050348">
    <property type="entry name" value="Protein-Tyr_Phosphatase"/>
</dbReference>
<dbReference type="InterPro" id="IPR000242">
    <property type="entry name" value="PTP_cat"/>
</dbReference>
<dbReference type="PANTHER" id="PTHR19134">
    <property type="entry name" value="RECEPTOR-TYPE TYROSINE-PROTEIN PHOSPHATASE"/>
    <property type="match status" value="1"/>
</dbReference>
<dbReference type="PANTHER" id="PTHR19134:SF449">
    <property type="entry name" value="TYROSINE-PROTEIN PHOSPHATASE 1"/>
    <property type="match status" value="1"/>
</dbReference>
<dbReference type="Pfam" id="PF00102">
    <property type="entry name" value="Y_phosphatase"/>
    <property type="match status" value="1"/>
</dbReference>
<dbReference type="SUPFAM" id="SSF52799">
    <property type="entry name" value="(Phosphotyrosine protein) phosphatases II"/>
    <property type="match status" value="1"/>
</dbReference>
<dbReference type="PROSITE" id="PS50055">
    <property type="entry name" value="TYR_PHOSPHATASE_PTP"/>
    <property type="match status" value="1"/>
</dbReference>
<accession>P28207</accession>